<name>YVDE_LACLC</name>
<evidence type="ECO:0000255" key="1">
    <source>
        <dbReference type="PROSITE-ProRule" id="PRU00605"/>
    </source>
</evidence>
<evidence type="ECO:0000305" key="2"/>
<keyword id="KW-0315">Glutamine amidotransferase</keyword>
<keyword id="KW-0808">Transferase</keyword>
<feature type="chain" id="PRO_0000218494" description="Putative glutamine amidotransferase-like protein YvdE homolog">
    <location>
        <begin position="1"/>
        <end position="188" status="greater than"/>
    </location>
</feature>
<feature type="domain" description="Glutamine amidotransferase type-1" evidence="1">
    <location>
        <begin position="17"/>
        <end position="188" status="greater than"/>
    </location>
</feature>
<feature type="non-terminal residue">
    <location>
        <position position="188"/>
    </location>
</feature>
<sequence>MAIIGILGTPYNTVERSPFWWNKVSYTRQSFIDVFQELGHTVIVLPVDKTENIKNYLPLVDKIVLTGGVDVSPYLYGEEPHAQLGTTDPIRDRFELAAIKAALEANKPILGVCRGLQLLNVYFGGTLYQDLSLTSSQIKHLQSPTPQEVPTHHISVEKEDSFRFLPENYMVNSFHHQVIKDLGQGLQA</sequence>
<reference key="1">
    <citation type="journal article" date="1991" name="Appl. Environ. Microbiol.">
        <title>Cloning and DNA sequence analysis of an X-prolyl dipeptidyl aminopeptidase gene from Lactococcus lactis subsp. lactis NCDO 763.</title>
        <authorList>
            <person name="Nardi M."/>
            <person name="Chopin M.-C."/>
            <person name="Chopin A."/>
            <person name="Cals M.M."/>
            <person name="Gripon J.-C."/>
        </authorList>
    </citation>
    <scope>NUCLEOTIDE SEQUENCE [GENOMIC DNA]</scope>
    <source>
        <strain>NCDO 763 / ML3</strain>
    </source>
</reference>
<organism>
    <name type="scientific">Lactococcus lactis subsp. cremoris</name>
    <name type="common">Streptococcus cremoris</name>
    <dbReference type="NCBI Taxonomy" id="1359"/>
    <lineage>
        <taxon>Bacteria</taxon>
        <taxon>Bacillati</taxon>
        <taxon>Bacillota</taxon>
        <taxon>Bacilli</taxon>
        <taxon>Lactobacillales</taxon>
        <taxon>Streptococcaceae</taxon>
        <taxon>Lactococcus</taxon>
    </lineage>
</organism>
<accession>P22347</accession>
<proteinExistence type="predicted"/>
<comment type="sequence caution" evidence="2">
    <conflict type="frameshift">
        <sequence resource="EMBL-CDS" id="AAA25208"/>
    </conflict>
</comment>
<protein>
    <recommendedName>
        <fullName>Putative glutamine amidotransferase-like protein YvdE homolog</fullName>
    </recommendedName>
</protein>
<dbReference type="EMBL" id="M35865">
    <property type="protein sequence ID" value="AAA25208.1"/>
    <property type="status" value="ALT_FRAME"/>
    <property type="molecule type" value="Genomic_DNA"/>
</dbReference>
<dbReference type="SMR" id="P22347"/>
<dbReference type="GO" id="GO:0005829">
    <property type="term" value="C:cytosol"/>
    <property type="evidence" value="ECO:0007669"/>
    <property type="project" value="TreeGrafter"/>
</dbReference>
<dbReference type="GO" id="GO:0033969">
    <property type="term" value="F:gamma-glutamyl-gamma-aminobutyrate hydrolase activity"/>
    <property type="evidence" value="ECO:0007669"/>
    <property type="project" value="TreeGrafter"/>
</dbReference>
<dbReference type="GO" id="GO:0016740">
    <property type="term" value="F:transferase activity"/>
    <property type="evidence" value="ECO:0007669"/>
    <property type="project" value="UniProtKB-KW"/>
</dbReference>
<dbReference type="GO" id="GO:0006598">
    <property type="term" value="P:polyamine catabolic process"/>
    <property type="evidence" value="ECO:0007669"/>
    <property type="project" value="TreeGrafter"/>
</dbReference>
<dbReference type="CDD" id="cd01745">
    <property type="entry name" value="GATase1_2"/>
    <property type="match status" value="1"/>
</dbReference>
<dbReference type="Gene3D" id="3.40.50.880">
    <property type="match status" value="1"/>
</dbReference>
<dbReference type="InterPro" id="IPR029062">
    <property type="entry name" value="Class_I_gatase-like"/>
</dbReference>
<dbReference type="InterPro" id="IPR011697">
    <property type="entry name" value="Peptidase_C26"/>
</dbReference>
<dbReference type="InterPro" id="IPR044668">
    <property type="entry name" value="PuuD-like"/>
</dbReference>
<dbReference type="PANTHER" id="PTHR43235">
    <property type="entry name" value="GLUTAMINE AMIDOTRANSFERASE PB2B2.05-RELATED"/>
    <property type="match status" value="1"/>
</dbReference>
<dbReference type="PANTHER" id="PTHR43235:SF1">
    <property type="entry name" value="GLUTAMINE AMIDOTRANSFERASE PB2B2.05-RELATED"/>
    <property type="match status" value="1"/>
</dbReference>
<dbReference type="Pfam" id="PF07722">
    <property type="entry name" value="Peptidase_C26"/>
    <property type="match status" value="1"/>
</dbReference>
<dbReference type="SUPFAM" id="SSF52317">
    <property type="entry name" value="Class I glutamine amidotransferase-like"/>
    <property type="match status" value="1"/>
</dbReference>
<dbReference type="PROSITE" id="PS51273">
    <property type="entry name" value="GATASE_TYPE_1"/>
    <property type="match status" value="1"/>
</dbReference>